<reference key="1">
    <citation type="journal article" date="2009" name="ISME J.">
        <title>The genome sequence of the psychrophilic archaeon, Methanococcoides burtonii: the role of genome evolution in cold adaptation.</title>
        <authorList>
            <person name="Allen M.A."/>
            <person name="Lauro F.M."/>
            <person name="Williams T.J."/>
            <person name="Burg D."/>
            <person name="Siddiqui K.S."/>
            <person name="De Francisci D."/>
            <person name="Chong K.W."/>
            <person name="Pilak O."/>
            <person name="Chew H.H."/>
            <person name="De Maere M.Z."/>
            <person name="Ting L."/>
            <person name="Katrib M."/>
            <person name="Ng C."/>
            <person name="Sowers K.R."/>
            <person name="Galperin M.Y."/>
            <person name="Anderson I.J."/>
            <person name="Ivanova N."/>
            <person name="Dalin E."/>
            <person name="Martinez M."/>
            <person name="Lapidus A."/>
            <person name="Hauser L."/>
            <person name="Land M."/>
            <person name="Thomas T."/>
            <person name="Cavicchioli R."/>
        </authorList>
    </citation>
    <scope>NUCLEOTIDE SEQUENCE [LARGE SCALE GENOMIC DNA]</scope>
    <source>
        <strain>DSM 6242 / NBRC 107633 / OCM 468 / ACE-M</strain>
    </source>
</reference>
<accession>Q12W53</accession>
<comment type="function">
    <text evidence="1">Catalyzes the transfer of the 2-phospholactate moiety from (2S)-lactyl-2-diphospho-5'-guanosine to 7,8-didemethyl-8-hydroxy-5-deazariboflavin (FO) with the formation of oxidized coenzyme F420-0 and GMP.</text>
</comment>
<comment type="catalytic activity">
    <reaction evidence="1">
        <text>(2S)-lactyl-2-diphospho-5'-guanosine + 7,8-didemethyl-8-hydroxy-5-deazariboflavin = oxidized coenzyme F420-0 + GMP + H(+)</text>
        <dbReference type="Rhea" id="RHEA:63444"/>
        <dbReference type="ChEBI" id="CHEBI:15378"/>
        <dbReference type="ChEBI" id="CHEBI:58115"/>
        <dbReference type="ChEBI" id="CHEBI:59435"/>
        <dbReference type="ChEBI" id="CHEBI:59904"/>
        <dbReference type="ChEBI" id="CHEBI:59907"/>
        <dbReference type="EC" id="2.7.8.28"/>
    </reaction>
</comment>
<comment type="cofactor">
    <cofactor evidence="1">
        <name>Mg(2+)</name>
        <dbReference type="ChEBI" id="CHEBI:18420"/>
    </cofactor>
</comment>
<comment type="pathway">
    <text evidence="1">Cofactor biosynthesis; coenzyme F420 biosynthesis.</text>
</comment>
<comment type="subunit">
    <text evidence="1">Homodimer.</text>
</comment>
<comment type="similarity">
    <text evidence="1">Belongs to the CofD family.</text>
</comment>
<name>COFD_METBU</name>
<proteinExistence type="inferred from homology"/>
<gene>
    <name evidence="1" type="primary">cofD</name>
    <name type="ordered locus">Mbur_1411</name>
</gene>
<sequence>MIIFSGGTGTPKLLDGLRHIVPEDELTVVVNTAEDVWVSGNLITPDIDTILYLLSGRIDRDKWWGVKDDTFQTHREMKELGHDESMMIGDLDRVTHIMRSDLLRQGLSLSESIHELLSVYGIGVNVLPMSDDSVRTIVETPSGHVHFQDFWVKQHGVPEVLSVEQEGIEEASICSLVLEALESDDEVLIGPSNPITSIGPIISLPGMSRILRKKKVVAVSPIIGNEAVSGPAGKFMTARGFDVSSRGIADCYREFLDVLVLDDRDTTSPEQFQKMGVDVVSTNTLMKSLEISKDLSKKIVSIFANI</sequence>
<protein>
    <recommendedName>
        <fullName evidence="1">2-phospho-L-lactate transferase</fullName>
        <ecNumber evidence="1">2.7.8.28</ecNumber>
    </recommendedName>
</protein>
<keyword id="KW-0460">Magnesium</keyword>
<keyword id="KW-0808">Transferase</keyword>
<feature type="chain" id="PRO_0000259478" description="2-phospho-L-lactate transferase">
    <location>
        <begin position="1"/>
        <end position="306"/>
    </location>
</feature>
<feature type="binding site" evidence="1">
    <location>
        <position position="48"/>
    </location>
    <ligand>
        <name>7,8-didemethyl-8-hydroxy-5-deazariboflavin</name>
        <dbReference type="ChEBI" id="CHEBI:59904"/>
    </ligand>
</feature>
<organism>
    <name type="scientific">Methanococcoides burtonii (strain DSM 6242 / NBRC 107633 / OCM 468 / ACE-M)</name>
    <dbReference type="NCBI Taxonomy" id="259564"/>
    <lineage>
        <taxon>Archaea</taxon>
        <taxon>Methanobacteriati</taxon>
        <taxon>Methanobacteriota</taxon>
        <taxon>Stenosarchaea group</taxon>
        <taxon>Methanomicrobia</taxon>
        <taxon>Methanosarcinales</taxon>
        <taxon>Methanosarcinaceae</taxon>
        <taxon>Methanococcoides</taxon>
    </lineage>
</organism>
<evidence type="ECO:0000255" key="1">
    <source>
        <dbReference type="HAMAP-Rule" id="MF_01257"/>
    </source>
</evidence>
<dbReference type="EC" id="2.7.8.28" evidence="1"/>
<dbReference type="EMBL" id="CP000300">
    <property type="protein sequence ID" value="ABE52323.1"/>
    <property type="molecule type" value="Genomic_DNA"/>
</dbReference>
<dbReference type="RefSeq" id="WP_011499468.1">
    <property type="nucleotide sequence ID" value="NC_007955.1"/>
</dbReference>
<dbReference type="SMR" id="Q12W53"/>
<dbReference type="STRING" id="259564.Mbur_1411"/>
<dbReference type="GeneID" id="3998512"/>
<dbReference type="KEGG" id="mbu:Mbur_1411"/>
<dbReference type="HOGENOM" id="CLU_055795_1_0_2"/>
<dbReference type="OrthoDB" id="59563at2157"/>
<dbReference type="UniPathway" id="UPA00071"/>
<dbReference type="Proteomes" id="UP000001979">
    <property type="component" value="Chromosome"/>
</dbReference>
<dbReference type="GO" id="GO:0043743">
    <property type="term" value="F:LPPG:FO 2-phospho-L-lactate transferase activity"/>
    <property type="evidence" value="ECO:0007669"/>
    <property type="project" value="UniProtKB-EC"/>
</dbReference>
<dbReference type="GO" id="GO:0000287">
    <property type="term" value="F:magnesium ion binding"/>
    <property type="evidence" value="ECO:0007669"/>
    <property type="project" value="InterPro"/>
</dbReference>
<dbReference type="GO" id="GO:0052645">
    <property type="term" value="P:F420-0 metabolic process"/>
    <property type="evidence" value="ECO:0007669"/>
    <property type="project" value="UniProtKB-UniRule"/>
</dbReference>
<dbReference type="CDD" id="cd07186">
    <property type="entry name" value="CofD_like"/>
    <property type="match status" value="1"/>
</dbReference>
<dbReference type="Gene3D" id="1.10.8.240">
    <property type="entry name" value="CofD-like domain"/>
    <property type="match status" value="1"/>
</dbReference>
<dbReference type="Gene3D" id="3.40.50.10680">
    <property type="entry name" value="CofD-like domains"/>
    <property type="match status" value="1"/>
</dbReference>
<dbReference type="HAMAP" id="MF_01257">
    <property type="entry name" value="CofD"/>
    <property type="match status" value="1"/>
</dbReference>
<dbReference type="InterPro" id="IPR002882">
    <property type="entry name" value="CofD"/>
</dbReference>
<dbReference type="InterPro" id="IPR038136">
    <property type="entry name" value="CofD-like_dom_sf"/>
</dbReference>
<dbReference type="InterPro" id="IPR010115">
    <property type="entry name" value="FbiA/CofD"/>
</dbReference>
<dbReference type="NCBIfam" id="TIGR01819">
    <property type="entry name" value="F420_cofD"/>
    <property type="match status" value="1"/>
</dbReference>
<dbReference type="PANTHER" id="PTHR43007">
    <property type="entry name" value="2-PHOSPHO-L-LACTATE TRANSFERASE"/>
    <property type="match status" value="1"/>
</dbReference>
<dbReference type="PANTHER" id="PTHR43007:SF1">
    <property type="entry name" value="2-PHOSPHO-L-LACTATE TRANSFERASE"/>
    <property type="match status" value="1"/>
</dbReference>
<dbReference type="Pfam" id="PF01933">
    <property type="entry name" value="CofD"/>
    <property type="match status" value="1"/>
</dbReference>
<dbReference type="SUPFAM" id="SSF142338">
    <property type="entry name" value="CofD-like"/>
    <property type="match status" value="1"/>
</dbReference>